<sequence length="1142" mass="128717">MKEPLLGGECDKAVASQLGLLDEIKTEPDNAQEYCHRQQSRTQENELKINAVFSESASQLTAGIQLSLASSGVNKMLPSVSTTAIQVSCAGCKKILQKGQTAYQRKGSAQLFCSIPCITEYISSASSPVPSKRTCSNCSKDILNPKDVISVQLEDTTSCKTFCSLSCLSSYEEKRKPFVTICTNSILTKCSMCQKTAIIQYEVKYQNVKHNLCSNACLSKFHSANNFIMNCCENCGTYCYTSSSLSHILQMEGQSHYFNSSKSITAYKQKPAKPLISVPCKPLKPSDEMIETTSDLGKTELFCSINCFSAYSKAKMESSSVSVVSVVHDTSTELLSPKKDTTPVISNIVSLADTDVALPIMNTDVLQDTVSSVTATADVIVDLSKSSPSEPSNAVASSSTEQPSVSPSSSVFSQHAIGSSTEVQKDNMKSMKISDELCHPKCTSKVQKVKGKSRSIKKSCCADFECLENSKKDVAFCYSCQLFCQKYFSCGRESFATHGTSNWKKTLEKFRKHEKSEMHLKSLEFWREYQFCDGAVSDDLSIHSKQIEGNKKYLKLIIENILFLGKQCLPLRGNDQSVSSVNKGNFLELLEMRAKDKGEETFRLMNSQVDFYNSTQIQSDIIEIIKTEMLQDIVNEINDSSAFSIICDETINSAMKEQLSICVRYPQKSSKAILIKERFLGFVDTEEMTGTHLHRTIKTYLQQIGVDMDKIHGQAYDSTTNLKIKFNKIAAEFKKEEPRALYIHCYAHFLDLSIIRFCKEVKELRSALKTLSSLFNTICMSGEMLANFRNIYRLSQNKTCKKHISQSCWTVHDRTLLSVIDSLPEIIETLEVIASHSSNTSFADELSHLLTLVSKFEFVFCLKFLYRVLSVTGILSKELQNKTIDIFSLSSKIEAILECLSSERNDVYFKTIWDGTEEICQKITCKGFKVEKPSLQKRRKIQKSVDLGNSDNMFFPTSTEEQYKINIYYQGLDTILQNLKLCFSEFDYCKIKQISELLFKWNEPLNETTAKHVQEFYKLDEDIIPELRFYRHYAKLNFVIDDSCINFVSLGCLFIQHGLHSNIPCLSKLLYIALSWPITSASTENSFSTLPRLKTYLCNTMGQEKLTGPALMAVEQELVNKLMEPERLNEIVEKFISQMKEI</sequence>
<reference key="1">
    <citation type="journal article" date="2007" name="BMC Genomics">
        <title>The full-ORF clone resource of the German cDNA consortium.</title>
        <authorList>
            <person name="Bechtel S."/>
            <person name="Rosenfelder H."/>
            <person name="Duda A."/>
            <person name="Schmidt C.P."/>
            <person name="Ernst U."/>
            <person name="Wellenreuther R."/>
            <person name="Mehrle A."/>
            <person name="Schuster C."/>
            <person name="Bahr A."/>
            <person name="Bloecker H."/>
            <person name="Heubner D."/>
            <person name="Hoerlein A."/>
            <person name="Michel G."/>
            <person name="Wedler H."/>
            <person name="Koehrer K."/>
            <person name="Ottenwaelder B."/>
            <person name="Poustka A."/>
            <person name="Wiemann S."/>
            <person name="Schupp I."/>
        </authorList>
    </citation>
    <scope>NUCLEOTIDE SEQUENCE [LARGE SCALE MRNA]</scope>
    <scope>VARIANT MET-73</scope>
    <source>
        <tissue>Heart</tissue>
    </source>
</reference>
<reference key="2">
    <citation type="journal article" date="2006" name="Nature">
        <title>The DNA sequence and biological annotation of human chromosome 1.</title>
        <authorList>
            <person name="Gregory S.G."/>
            <person name="Barlow K.F."/>
            <person name="McLay K.E."/>
            <person name="Kaul R."/>
            <person name="Swarbreck D."/>
            <person name="Dunham A."/>
            <person name="Scott C.E."/>
            <person name="Howe K.L."/>
            <person name="Woodfine K."/>
            <person name="Spencer C.C.A."/>
            <person name="Jones M.C."/>
            <person name="Gillson C."/>
            <person name="Searle S."/>
            <person name="Zhou Y."/>
            <person name="Kokocinski F."/>
            <person name="McDonald L."/>
            <person name="Evans R."/>
            <person name="Phillips K."/>
            <person name="Atkinson A."/>
            <person name="Cooper R."/>
            <person name="Jones C."/>
            <person name="Hall R.E."/>
            <person name="Andrews T.D."/>
            <person name="Lloyd C."/>
            <person name="Ainscough R."/>
            <person name="Almeida J.P."/>
            <person name="Ambrose K.D."/>
            <person name="Anderson F."/>
            <person name="Andrew R.W."/>
            <person name="Ashwell R.I.S."/>
            <person name="Aubin K."/>
            <person name="Babbage A.K."/>
            <person name="Bagguley C.L."/>
            <person name="Bailey J."/>
            <person name="Beasley H."/>
            <person name="Bethel G."/>
            <person name="Bird C.P."/>
            <person name="Bray-Allen S."/>
            <person name="Brown J.Y."/>
            <person name="Brown A.J."/>
            <person name="Buckley D."/>
            <person name="Burton J."/>
            <person name="Bye J."/>
            <person name="Carder C."/>
            <person name="Chapman J.C."/>
            <person name="Clark S.Y."/>
            <person name="Clarke G."/>
            <person name="Clee C."/>
            <person name="Cobley V."/>
            <person name="Collier R.E."/>
            <person name="Corby N."/>
            <person name="Coville G.J."/>
            <person name="Davies J."/>
            <person name="Deadman R."/>
            <person name="Dunn M."/>
            <person name="Earthrowl M."/>
            <person name="Ellington A.G."/>
            <person name="Errington H."/>
            <person name="Frankish A."/>
            <person name="Frankland J."/>
            <person name="French L."/>
            <person name="Garner P."/>
            <person name="Garnett J."/>
            <person name="Gay L."/>
            <person name="Ghori M.R.J."/>
            <person name="Gibson R."/>
            <person name="Gilby L.M."/>
            <person name="Gillett W."/>
            <person name="Glithero R.J."/>
            <person name="Grafham D.V."/>
            <person name="Griffiths C."/>
            <person name="Griffiths-Jones S."/>
            <person name="Grocock R."/>
            <person name="Hammond S."/>
            <person name="Harrison E.S.I."/>
            <person name="Hart E."/>
            <person name="Haugen E."/>
            <person name="Heath P.D."/>
            <person name="Holmes S."/>
            <person name="Holt K."/>
            <person name="Howden P.J."/>
            <person name="Hunt A.R."/>
            <person name="Hunt S.E."/>
            <person name="Hunter G."/>
            <person name="Isherwood J."/>
            <person name="James R."/>
            <person name="Johnson C."/>
            <person name="Johnson D."/>
            <person name="Joy A."/>
            <person name="Kay M."/>
            <person name="Kershaw J.K."/>
            <person name="Kibukawa M."/>
            <person name="Kimberley A.M."/>
            <person name="King A."/>
            <person name="Knights A.J."/>
            <person name="Lad H."/>
            <person name="Laird G."/>
            <person name="Lawlor S."/>
            <person name="Leongamornlert D.A."/>
            <person name="Lloyd D.M."/>
            <person name="Loveland J."/>
            <person name="Lovell J."/>
            <person name="Lush M.J."/>
            <person name="Lyne R."/>
            <person name="Martin S."/>
            <person name="Mashreghi-Mohammadi M."/>
            <person name="Matthews L."/>
            <person name="Matthews N.S.W."/>
            <person name="McLaren S."/>
            <person name="Milne S."/>
            <person name="Mistry S."/>
            <person name="Moore M.J.F."/>
            <person name="Nickerson T."/>
            <person name="O'Dell C.N."/>
            <person name="Oliver K."/>
            <person name="Palmeiri A."/>
            <person name="Palmer S.A."/>
            <person name="Parker A."/>
            <person name="Patel D."/>
            <person name="Pearce A.V."/>
            <person name="Peck A.I."/>
            <person name="Pelan S."/>
            <person name="Phelps K."/>
            <person name="Phillimore B.J."/>
            <person name="Plumb R."/>
            <person name="Rajan J."/>
            <person name="Raymond C."/>
            <person name="Rouse G."/>
            <person name="Saenphimmachak C."/>
            <person name="Sehra H.K."/>
            <person name="Sheridan E."/>
            <person name="Shownkeen R."/>
            <person name="Sims S."/>
            <person name="Skuce C.D."/>
            <person name="Smith M."/>
            <person name="Steward C."/>
            <person name="Subramanian S."/>
            <person name="Sycamore N."/>
            <person name="Tracey A."/>
            <person name="Tromans A."/>
            <person name="Van Helmond Z."/>
            <person name="Wall M."/>
            <person name="Wallis J.M."/>
            <person name="White S."/>
            <person name="Whitehead S.L."/>
            <person name="Wilkinson J.E."/>
            <person name="Willey D.L."/>
            <person name="Williams H."/>
            <person name="Wilming L."/>
            <person name="Wray P.W."/>
            <person name="Wu Z."/>
            <person name="Coulson A."/>
            <person name="Vaudin M."/>
            <person name="Sulston J.E."/>
            <person name="Durbin R.M."/>
            <person name="Hubbard T."/>
            <person name="Wooster R."/>
            <person name="Dunham I."/>
            <person name="Carter N.P."/>
            <person name="McVean G."/>
            <person name="Ross M.T."/>
            <person name="Harrow J."/>
            <person name="Olson M.V."/>
            <person name="Beck S."/>
            <person name="Rogers J."/>
            <person name="Bentley D.R."/>
        </authorList>
    </citation>
    <scope>NUCLEOTIDE SEQUENCE [LARGE SCALE GENOMIC DNA]</scope>
</reference>
<reference key="3">
    <citation type="submission" date="2005-09" db="EMBL/GenBank/DDBJ databases">
        <authorList>
            <person name="Mural R.J."/>
            <person name="Istrail S."/>
            <person name="Sutton G.G."/>
            <person name="Florea L."/>
            <person name="Halpern A.L."/>
            <person name="Mobarry C.M."/>
            <person name="Lippert R."/>
            <person name="Walenz B."/>
            <person name="Shatkay H."/>
            <person name="Dew I."/>
            <person name="Miller J.R."/>
            <person name="Flanigan M.J."/>
            <person name="Edwards N.J."/>
            <person name="Bolanos R."/>
            <person name="Fasulo D."/>
            <person name="Halldorsson B.V."/>
            <person name="Hannenhalli S."/>
            <person name="Turner R."/>
            <person name="Yooseph S."/>
            <person name="Lu F."/>
            <person name="Nusskern D.R."/>
            <person name="Shue B.C."/>
            <person name="Zheng X.H."/>
            <person name="Zhong F."/>
            <person name="Delcher A.L."/>
            <person name="Huson D.H."/>
            <person name="Kravitz S.A."/>
            <person name="Mouchard L."/>
            <person name="Reinert K."/>
            <person name="Remington K.A."/>
            <person name="Clark A.G."/>
            <person name="Waterman M.S."/>
            <person name="Eichler E.E."/>
            <person name="Adams M.D."/>
            <person name="Hunkapiller M.W."/>
            <person name="Myers E.W."/>
            <person name="Venter J.C."/>
        </authorList>
    </citation>
    <scope>NUCLEOTIDE SEQUENCE [LARGE SCALE GENOMIC DNA]</scope>
    <scope>VARIANT MET-73</scope>
</reference>
<reference key="4">
    <citation type="journal article" date="2015" name="Mol. Cell. Proteomics">
        <title>System-wide analysis of SUMOylation dynamics in response to replication stress reveals novel small ubiquitin-like modified target proteins and acceptor lysines relevant for genome stability.</title>
        <authorList>
            <person name="Xiao Z."/>
            <person name="Chang J.G."/>
            <person name="Hendriks I.A."/>
            <person name="Sigurdsson J.O."/>
            <person name="Olsen J.V."/>
            <person name="Vertegaal A.C."/>
        </authorList>
    </citation>
    <scope>SUMOYLATION [LARGE SCALE ANALYSIS] AT LYS-25</scope>
    <scope>IDENTIFICATION BY MASS SPECTROMETRY [LARGE SCALE ANALYSIS]</scope>
</reference>
<reference key="5">
    <citation type="journal article" date="2017" name="Nat. Struct. Mol. Biol.">
        <title>Site-specific mapping of the human SUMO proteome reveals co-modification with phosphorylation.</title>
        <authorList>
            <person name="Hendriks I.A."/>
            <person name="Lyon D."/>
            <person name="Young C."/>
            <person name="Jensen L.J."/>
            <person name="Vertegaal A.C."/>
            <person name="Nielsen M.L."/>
        </authorList>
    </citation>
    <scope>SUMOYLATION [LARGE SCALE ANALYSIS] AT LYS-25 AND LYS-284</scope>
    <scope>IDENTIFICATION BY MASS SPECTROMETRY [LARGE SCALE ANALYSIS]</scope>
</reference>
<dbReference type="EMBL" id="BX537537">
    <property type="protein sequence ID" value="CAD97777.1"/>
    <property type="molecule type" value="mRNA"/>
</dbReference>
<dbReference type="EMBL" id="AL607089">
    <property type="status" value="NOT_ANNOTATED_CDS"/>
    <property type="molecule type" value="Genomic_DNA"/>
</dbReference>
<dbReference type="EMBL" id="CH471059">
    <property type="protein sequence ID" value="EAX07428.1"/>
    <property type="molecule type" value="Genomic_DNA"/>
</dbReference>
<dbReference type="EMBL" id="CH471059">
    <property type="protein sequence ID" value="EAX07430.1"/>
    <property type="molecule type" value="Genomic_DNA"/>
</dbReference>
<dbReference type="CCDS" id="CCDS41302.1"/>
<dbReference type="RefSeq" id="NP_001276017.1">
    <property type="nucleotide sequence ID" value="NM_001289088.2"/>
</dbReference>
<dbReference type="RefSeq" id="NP_001276018.1">
    <property type="nucleotide sequence ID" value="NM_001289089.1"/>
</dbReference>
<dbReference type="RefSeq" id="NP_001276019.1">
    <property type="nucleotide sequence ID" value="NM_001289090.2"/>
</dbReference>
<dbReference type="RefSeq" id="NP_001306884.1">
    <property type="nucleotide sequence ID" value="NM_001319955.1"/>
</dbReference>
<dbReference type="RefSeq" id="NP_079048.3">
    <property type="nucleotide sequence ID" value="NM_024772.4"/>
</dbReference>
<dbReference type="SMR" id="Q5SVZ6"/>
<dbReference type="BioGRID" id="122922">
    <property type="interactions" value="81"/>
</dbReference>
<dbReference type="FunCoup" id="Q5SVZ6">
    <property type="interactions" value="1417"/>
</dbReference>
<dbReference type="IntAct" id="Q5SVZ6">
    <property type="interactions" value="70"/>
</dbReference>
<dbReference type="MINT" id="Q5SVZ6"/>
<dbReference type="STRING" id="9606.ENSP00000496876"/>
<dbReference type="iPTMnet" id="Q5SVZ6"/>
<dbReference type="PhosphoSitePlus" id="Q5SVZ6"/>
<dbReference type="BioMuta" id="ZMYM1"/>
<dbReference type="DMDM" id="74743897"/>
<dbReference type="jPOST" id="Q5SVZ6"/>
<dbReference type="MassIVE" id="Q5SVZ6"/>
<dbReference type="PaxDb" id="9606-ENSP00000482579"/>
<dbReference type="PeptideAtlas" id="Q5SVZ6"/>
<dbReference type="ProteomicsDB" id="63955"/>
<dbReference type="Pumba" id="Q5SVZ6"/>
<dbReference type="Antibodypedia" id="57964">
    <property type="antibodies" value="33 antibodies from 18 providers"/>
</dbReference>
<dbReference type="DNASU" id="79830"/>
<dbReference type="Ensembl" id="ENST00000359858.9">
    <property type="protein sequence ID" value="ENSP00000352920.4"/>
    <property type="gene ID" value="ENSG00000197056.12"/>
</dbReference>
<dbReference type="Ensembl" id="ENST00000373330.1">
    <property type="protein sequence ID" value="ENSP00000362427.1"/>
    <property type="gene ID" value="ENSG00000197056.12"/>
</dbReference>
<dbReference type="Ensembl" id="ENST00000611874.4">
    <property type="protein sequence ID" value="ENSP00000482579.1"/>
    <property type="gene ID" value="ENSG00000197056.12"/>
</dbReference>
<dbReference type="Ensembl" id="ENST00000650449.2">
    <property type="protein sequence ID" value="ENSP00000496876.1"/>
    <property type="gene ID" value="ENSG00000197056.12"/>
</dbReference>
<dbReference type="GeneID" id="79830"/>
<dbReference type="KEGG" id="hsa:79830"/>
<dbReference type="MANE-Select" id="ENST00000359858.9">
    <property type="protein sequence ID" value="ENSP00000352920.4"/>
    <property type="RefSeq nucleotide sequence ID" value="NM_024772.5"/>
    <property type="RefSeq protein sequence ID" value="NP_079048.3"/>
</dbReference>
<dbReference type="UCSC" id="uc001bym.5">
    <property type="organism name" value="human"/>
</dbReference>
<dbReference type="AGR" id="HGNC:26253"/>
<dbReference type="CTD" id="79830"/>
<dbReference type="DisGeNET" id="79830"/>
<dbReference type="GeneCards" id="ZMYM1"/>
<dbReference type="HGNC" id="HGNC:26253">
    <property type="gene designation" value="ZMYM1"/>
</dbReference>
<dbReference type="HPA" id="ENSG00000197056">
    <property type="expression patterns" value="Low tissue specificity"/>
</dbReference>
<dbReference type="neXtProt" id="NX_Q5SVZ6"/>
<dbReference type="OpenTargets" id="ENSG00000197056"/>
<dbReference type="PharmGKB" id="PA134948969"/>
<dbReference type="VEuPathDB" id="HostDB:ENSG00000197056"/>
<dbReference type="eggNOG" id="ENOG502QSU3">
    <property type="taxonomic scope" value="Eukaryota"/>
</dbReference>
<dbReference type="GeneTree" id="ENSGT00940000157337"/>
<dbReference type="HOGENOM" id="CLU_012161_0_0_1"/>
<dbReference type="InParanoid" id="Q5SVZ6"/>
<dbReference type="OMA" id="CWTVHDH"/>
<dbReference type="OrthoDB" id="9950531at2759"/>
<dbReference type="PAN-GO" id="Q5SVZ6">
    <property type="GO annotations" value="0 GO annotations based on evolutionary models"/>
</dbReference>
<dbReference type="PhylomeDB" id="Q5SVZ6"/>
<dbReference type="TreeFam" id="TF330114"/>
<dbReference type="PathwayCommons" id="Q5SVZ6"/>
<dbReference type="SignaLink" id="Q5SVZ6"/>
<dbReference type="BioGRID-ORCS" id="79830">
    <property type="hits" value="19 hits in 1158 CRISPR screens"/>
</dbReference>
<dbReference type="ChiTaRS" id="ZMYM1">
    <property type="organism name" value="human"/>
</dbReference>
<dbReference type="GenomeRNAi" id="79830"/>
<dbReference type="Pharos" id="Q5SVZ6">
    <property type="development level" value="Tdark"/>
</dbReference>
<dbReference type="PRO" id="PR:Q5SVZ6"/>
<dbReference type="Proteomes" id="UP000005640">
    <property type="component" value="Chromosome 1"/>
</dbReference>
<dbReference type="RNAct" id="Q5SVZ6">
    <property type="molecule type" value="protein"/>
</dbReference>
<dbReference type="Bgee" id="ENSG00000197056">
    <property type="expression patterns" value="Expressed in primordial germ cell in gonad and 153 other cell types or tissues"/>
</dbReference>
<dbReference type="ExpressionAtlas" id="Q5SVZ6">
    <property type="expression patterns" value="baseline and differential"/>
</dbReference>
<dbReference type="GO" id="GO:0005634">
    <property type="term" value="C:nucleus"/>
    <property type="evidence" value="ECO:0007669"/>
    <property type="project" value="UniProtKB-SubCell"/>
</dbReference>
<dbReference type="GO" id="GO:0046983">
    <property type="term" value="F:protein dimerization activity"/>
    <property type="evidence" value="ECO:0007669"/>
    <property type="project" value="InterPro"/>
</dbReference>
<dbReference type="GO" id="GO:0008270">
    <property type="term" value="F:zinc ion binding"/>
    <property type="evidence" value="ECO:0007669"/>
    <property type="project" value="UniProtKB-KW"/>
</dbReference>
<dbReference type="InterPro" id="IPR025398">
    <property type="entry name" value="DUF4371"/>
</dbReference>
<dbReference type="InterPro" id="IPR008906">
    <property type="entry name" value="HATC_C_dom"/>
</dbReference>
<dbReference type="InterPro" id="IPR012337">
    <property type="entry name" value="RNaseH-like_sf"/>
</dbReference>
<dbReference type="InterPro" id="IPR011017">
    <property type="entry name" value="TRASH_dom"/>
</dbReference>
<dbReference type="InterPro" id="IPR010507">
    <property type="entry name" value="Znf_MYM"/>
</dbReference>
<dbReference type="InterPro" id="IPR051284">
    <property type="entry name" value="ZnF_MYMT-QRICH1"/>
</dbReference>
<dbReference type="PANTHER" id="PTHR45736">
    <property type="entry name" value="ZINC FINGER MYM-TYPE PROTEIN"/>
    <property type="match status" value="1"/>
</dbReference>
<dbReference type="PANTHER" id="PTHR45736:SF4">
    <property type="entry name" value="ZINC FINGER MYM-TYPE PROTEIN 1"/>
    <property type="match status" value="1"/>
</dbReference>
<dbReference type="Pfam" id="PF05699">
    <property type="entry name" value="Dimer_Tnp_hAT"/>
    <property type="match status" value="1"/>
</dbReference>
<dbReference type="Pfam" id="PF14291">
    <property type="entry name" value="DUF4371"/>
    <property type="match status" value="1"/>
</dbReference>
<dbReference type="Pfam" id="PF24900">
    <property type="entry name" value="TRASH_ZMYM4"/>
    <property type="match status" value="1"/>
</dbReference>
<dbReference type="Pfam" id="PF06467">
    <property type="entry name" value="zf-FCS"/>
    <property type="match status" value="4"/>
</dbReference>
<dbReference type="SMART" id="SM00746">
    <property type="entry name" value="TRASH"/>
    <property type="match status" value="5"/>
</dbReference>
<dbReference type="SUPFAM" id="SSF57716">
    <property type="entry name" value="Glucocorticoid receptor-like (DNA-binding domain)"/>
    <property type="match status" value="1"/>
</dbReference>
<dbReference type="SUPFAM" id="SSF53098">
    <property type="entry name" value="Ribonuclease H-like"/>
    <property type="match status" value="1"/>
</dbReference>
<name>ZMYM1_HUMAN</name>
<protein>
    <recommendedName>
        <fullName>Zinc finger MYM-type protein 1</fullName>
    </recommendedName>
</protein>
<accession>Q5SVZ6</accession>
<accession>D3DPR7</accession>
<accession>Q7Z3Q4</accession>
<proteinExistence type="evidence at protein level"/>
<keyword id="KW-1017">Isopeptide bond</keyword>
<keyword id="KW-0479">Metal-binding</keyword>
<keyword id="KW-0539">Nucleus</keyword>
<keyword id="KW-1267">Proteomics identification</keyword>
<keyword id="KW-1185">Reference proteome</keyword>
<keyword id="KW-0677">Repeat</keyword>
<keyword id="KW-0832">Ubl conjugation</keyword>
<keyword id="KW-0862">Zinc</keyword>
<keyword id="KW-0863">Zinc-finger</keyword>
<comment type="subcellular location">
    <subcellularLocation>
        <location evidence="4">Nucleus</location>
    </subcellularLocation>
</comment>
<organism>
    <name type="scientific">Homo sapiens</name>
    <name type="common">Human</name>
    <dbReference type="NCBI Taxonomy" id="9606"/>
    <lineage>
        <taxon>Eukaryota</taxon>
        <taxon>Metazoa</taxon>
        <taxon>Chordata</taxon>
        <taxon>Craniata</taxon>
        <taxon>Vertebrata</taxon>
        <taxon>Euteleostomi</taxon>
        <taxon>Mammalia</taxon>
        <taxon>Eutheria</taxon>
        <taxon>Euarchontoglires</taxon>
        <taxon>Primates</taxon>
        <taxon>Haplorrhini</taxon>
        <taxon>Catarrhini</taxon>
        <taxon>Hominidae</taxon>
        <taxon>Homo</taxon>
    </lineage>
</organism>
<feature type="chain" id="PRO_0000191377" description="Zinc finger MYM-type protein 1">
    <location>
        <begin position="1"/>
        <end position="1142"/>
    </location>
</feature>
<feature type="zinc finger region" description="MYM-type 1">
    <location>
        <begin position="110"/>
        <end position="148"/>
    </location>
</feature>
<feature type="zinc finger region" description="MYM-type 2">
    <location>
        <begin position="160"/>
        <end position="203"/>
    </location>
</feature>
<feature type="zinc finger region" description="MYM-type 3">
    <location>
        <begin position="210"/>
        <end position="245"/>
    </location>
</feature>
<feature type="zinc finger region" description="MYM-type 4">
    <location>
        <begin position="300"/>
        <end position="331"/>
    </location>
</feature>
<feature type="zinc finger region" description="TTF-type">
    <location>
        <begin position="452"/>
        <end position="538"/>
    </location>
</feature>
<feature type="region of interest" description="Disordered" evidence="1">
    <location>
        <begin position="385"/>
        <end position="413"/>
    </location>
</feature>
<feature type="compositionally biased region" description="Polar residues" evidence="1">
    <location>
        <begin position="385"/>
        <end position="396"/>
    </location>
</feature>
<feature type="compositionally biased region" description="Low complexity" evidence="1">
    <location>
        <begin position="397"/>
        <end position="413"/>
    </location>
</feature>
<feature type="cross-link" description="Glycyl lysine isopeptide (Lys-Gly) (interchain with G-Cter in SUMO2)" evidence="5 6">
    <location>
        <position position="25"/>
    </location>
</feature>
<feature type="cross-link" description="Glycyl lysine isopeptide (Lys-Gly) (interchain with G-Cter in SUMO2)" evidence="6">
    <location>
        <position position="284"/>
    </location>
</feature>
<feature type="sequence variant" id="VAR_034589" description="In dbSNP:rs2971408." evidence="2 3">
    <original>V</original>
    <variation>M</variation>
    <location>
        <position position="73"/>
    </location>
</feature>
<feature type="sequence variant" id="VAR_053767" description="In dbSNP:rs7552714.">
    <original>R</original>
    <variation>Q</variation>
    <location>
        <position position="454"/>
    </location>
</feature>
<feature type="sequence variant" id="VAR_053768" description="In dbSNP:rs16837197.">
    <original>E</original>
    <variation>G</variation>
    <location>
        <position position="493"/>
    </location>
</feature>
<gene>
    <name type="primary">ZMYM1</name>
</gene>
<evidence type="ECO:0000256" key="1">
    <source>
        <dbReference type="SAM" id="MobiDB-lite"/>
    </source>
</evidence>
<evidence type="ECO:0000269" key="2">
    <source>
    </source>
</evidence>
<evidence type="ECO:0000269" key="3">
    <source ref="3"/>
</evidence>
<evidence type="ECO:0000305" key="4"/>
<evidence type="ECO:0007744" key="5">
    <source>
    </source>
</evidence>
<evidence type="ECO:0007744" key="6">
    <source>
    </source>
</evidence>